<dbReference type="EC" id="3.1.-.-" evidence="7"/>
<dbReference type="EMBL" id="ACYE01000020">
    <property type="protein sequence ID" value="EFE44838.1"/>
    <property type="molecule type" value="Genomic_DNA"/>
</dbReference>
<dbReference type="RefSeq" id="XP_003025449.1">
    <property type="nucleotide sequence ID" value="XM_003025403.1"/>
</dbReference>
<dbReference type="SMR" id="D4CZZ5"/>
<dbReference type="GeneID" id="9581675"/>
<dbReference type="KEGG" id="tve:TRV_00389"/>
<dbReference type="HOGENOM" id="CLU_048478_1_0_1"/>
<dbReference type="OrthoDB" id="3433at34384"/>
<dbReference type="Proteomes" id="UP000008383">
    <property type="component" value="Unassembled WGS sequence"/>
</dbReference>
<dbReference type="GO" id="GO:0008800">
    <property type="term" value="F:beta-lactamase activity"/>
    <property type="evidence" value="ECO:0007669"/>
    <property type="project" value="InterPro"/>
</dbReference>
<dbReference type="GO" id="GO:0008270">
    <property type="term" value="F:zinc ion binding"/>
    <property type="evidence" value="ECO:0007669"/>
    <property type="project" value="InterPro"/>
</dbReference>
<dbReference type="GO" id="GO:0017001">
    <property type="term" value="P:antibiotic catabolic process"/>
    <property type="evidence" value="ECO:0007669"/>
    <property type="project" value="InterPro"/>
</dbReference>
<dbReference type="GO" id="GO:0044550">
    <property type="term" value="P:secondary metabolite biosynthetic process"/>
    <property type="evidence" value="ECO:0007669"/>
    <property type="project" value="UniProtKB-ARBA"/>
</dbReference>
<dbReference type="CDD" id="cd07722">
    <property type="entry name" value="LACTB2-like_MBL-fold"/>
    <property type="match status" value="1"/>
</dbReference>
<dbReference type="FunFam" id="3.60.15.10:FF:000041">
    <property type="entry name" value="Metallo-beta-lactamase domain protein"/>
    <property type="match status" value="1"/>
</dbReference>
<dbReference type="Gene3D" id="3.60.15.10">
    <property type="entry name" value="Ribonuclease Z/Hydroxyacylglutathione hydrolase-like"/>
    <property type="match status" value="1"/>
</dbReference>
<dbReference type="Gene3D" id="1.10.10.10">
    <property type="entry name" value="Winged helix-like DNA-binding domain superfamily/Winged helix DNA-binding domain"/>
    <property type="match status" value="1"/>
</dbReference>
<dbReference type="InterPro" id="IPR001018">
    <property type="entry name" value="Beta-lactamase_class-B_CS"/>
</dbReference>
<dbReference type="InterPro" id="IPR047921">
    <property type="entry name" value="LACTB2-like_MBL-fold"/>
</dbReference>
<dbReference type="InterPro" id="IPR001279">
    <property type="entry name" value="Metallo-B-lactamas"/>
</dbReference>
<dbReference type="InterPro" id="IPR036866">
    <property type="entry name" value="RibonucZ/Hydroxyglut_hydro"/>
</dbReference>
<dbReference type="InterPro" id="IPR050662">
    <property type="entry name" value="Sec-metab_biosynth-thioest"/>
</dbReference>
<dbReference type="InterPro" id="IPR036388">
    <property type="entry name" value="WH-like_DNA-bd_sf"/>
</dbReference>
<dbReference type="PANTHER" id="PTHR23131">
    <property type="entry name" value="ENDORIBONUCLEASE LACTB2"/>
    <property type="match status" value="1"/>
</dbReference>
<dbReference type="PANTHER" id="PTHR23131:SF2">
    <property type="entry name" value="LACTAMASE-LIKE PROTEIN APTB-RELATED"/>
    <property type="match status" value="1"/>
</dbReference>
<dbReference type="Pfam" id="PF00753">
    <property type="entry name" value="Lactamase_B"/>
    <property type="match status" value="2"/>
</dbReference>
<dbReference type="SMART" id="SM00849">
    <property type="entry name" value="Lactamase_B"/>
    <property type="match status" value="1"/>
</dbReference>
<dbReference type="SUPFAM" id="SSF56281">
    <property type="entry name" value="Metallo-hydrolase/oxidoreductase"/>
    <property type="match status" value="1"/>
</dbReference>
<dbReference type="PROSITE" id="PS00743">
    <property type="entry name" value="BETA_LACTAMASE_B_1"/>
    <property type="match status" value="1"/>
</dbReference>
<proteinExistence type="inferred from homology"/>
<accession>D4CZZ5</accession>
<organism>
    <name type="scientific">Trichophyton verrucosum (strain HKI 0517)</name>
    <dbReference type="NCBI Taxonomy" id="663202"/>
    <lineage>
        <taxon>Eukaryota</taxon>
        <taxon>Fungi</taxon>
        <taxon>Dikarya</taxon>
        <taxon>Ascomycota</taxon>
        <taxon>Pezizomycotina</taxon>
        <taxon>Eurotiomycetes</taxon>
        <taxon>Eurotiomycetidae</taxon>
        <taxon>Onygenales</taxon>
        <taxon>Arthrodermataceae</taxon>
        <taxon>Trichophyton</taxon>
    </lineage>
</organism>
<protein>
    <recommendedName>
        <fullName evidence="5">Lactamase-like protein nscB</fullName>
        <ecNumber evidence="7">3.1.-.-</ecNumber>
    </recommendedName>
    <alternativeName>
        <fullName evidence="5">Neosartoricin B biosynthesis protein B</fullName>
    </alternativeName>
</protein>
<reference key="1">
    <citation type="journal article" date="2011" name="Genome Biol.">
        <title>Comparative and functional genomics provide insights into the pathogenicity of dermatophytic fungi.</title>
        <authorList>
            <person name="Burmester A."/>
            <person name="Shelest E."/>
            <person name="Gloeckner G."/>
            <person name="Heddergott C."/>
            <person name="Schindler S."/>
            <person name="Staib P."/>
            <person name="Heidel A."/>
            <person name="Felder M."/>
            <person name="Petzold A."/>
            <person name="Szafranski K."/>
            <person name="Feuermann M."/>
            <person name="Pedruzzi I."/>
            <person name="Priebe S."/>
            <person name="Groth M."/>
            <person name="Winkler R."/>
            <person name="Li W."/>
            <person name="Kniemeyer O."/>
            <person name="Schroeckh V."/>
            <person name="Hertweck C."/>
            <person name="Hube B."/>
            <person name="White T.C."/>
            <person name="Platzer M."/>
            <person name="Guthke R."/>
            <person name="Heitman J."/>
            <person name="Woestemeyer J."/>
            <person name="Zipfel P.F."/>
            <person name="Monod M."/>
            <person name="Brakhage A.A."/>
        </authorList>
    </citation>
    <scope>NUCLEOTIDE SEQUENCE [LARGE SCALE GENOMIC DNA]</scope>
    <source>
        <strain>HKI 0517</strain>
    </source>
</reference>
<reference key="2">
    <citation type="journal article" date="2013" name="ACS Synth. Biol.">
        <title>Discovery of cryptic polyketide metabolites from dermatophytes using heterologous expression in Aspergillus nidulans.</title>
        <authorList>
            <person name="Yin W.B."/>
            <person name="Chooi Y.H."/>
            <person name="Smith A.R."/>
            <person name="Cacho R.A."/>
            <person name="Hu Y."/>
            <person name="White T.C."/>
            <person name="Tang Y."/>
        </authorList>
    </citation>
    <scope>FUNCTION</scope>
</reference>
<gene>
    <name evidence="5" type="primary">nscB</name>
    <name type="ORF">TRV_00389</name>
</gene>
<comment type="function">
    <text evidence="1 2 7">Lactamase-like protein; part of the gene cluster that mediates the biosynthesis of neosartoricin B, a prenylated anthracenone that probably exhibits T-cell antiproliferative activity, suggestive of a physiological role as an immunosuppressive agent (PubMed:23758576). The non-reducing polyketide synthase nscA probably synthesizes and cyclizes the decaketide backbone (By similarity). The hydrolase nscB then mediates the product release through hydrolysis followed by spontaneous decarboxylation (By similarity). The prenyltransferase nscD catalyzes the addition of the dimethylallyl group to the aromatic C5 (By similarity). The FAD-dependent monooxygenase nscC is then responsible for the stereospecific hydroxylation at C2 (By similarity). Neosartoricin B can be converted into two additional compounds neosartoricins C and D (By similarity). Neosartoricin C is a spirocyclic compound that is cyclized through the attack of C3 hydroxyl on C14, followed by dehydration (By similarity). On the other hand, neosartoricin D is a further cyclized compound in which attack of C2 on C14 in neosartoricin C results in the formation of the acetal-containing dioxabicyclo-octanone ring (By similarity). Both of these compounds are novel and possibly represent related metabolites of the gene cluster (By similarity).</text>
</comment>
<comment type="cofactor">
    <cofactor evidence="3">
        <name>Zn(2+)</name>
        <dbReference type="ChEBI" id="CHEBI:29105"/>
    </cofactor>
    <text evidence="3">Binds 2 Zn(2+) ions per subunit.</text>
</comment>
<comment type="pathway">
    <text evidence="7">Secondary metabolite biosynthesis.</text>
</comment>
<comment type="similarity">
    <text evidence="6">Belongs to the metallo-beta-lactamase superfamily.</text>
</comment>
<evidence type="ECO:0000250" key="1">
    <source>
        <dbReference type="UniProtKB" id="A1D8J2"/>
    </source>
</evidence>
<evidence type="ECO:0000250" key="2">
    <source>
        <dbReference type="UniProtKB" id="F2S702"/>
    </source>
</evidence>
<evidence type="ECO:0000250" key="3">
    <source>
        <dbReference type="UniProtKB" id="Q988B9"/>
    </source>
</evidence>
<evidence type="ECO:0000255" key="4"/>
<evidence type="ECO:0000303" key="5">
    <source>
    </source>
</evidence>
<evidence type="ECO:0000305" key="6"/>
<evidence type="ECO:0000305" key="7">
    <source>
    </source>
</evidence>
<feature type="chain" id="PRO_0000437902" description="Lactamase-like protein nscB">
    <location>
        <begin position="1"/>
        <end position="287"/>
    </location>
</feature>
<feature type="active site" description="Proton donor/acceptor" evidence="4">
    <location>
        <position position="66"/>
    </location>
</feature>
<feature type="binding site" evidence="3">
    <location>
        <position position="62"/>
    </location>
    <ligand>
        <name>Zn(2+)</name>
        <dbReference type="ChEBI" id="CHEBI:29105"/>
        <label>1</label>
        <note>catalytic</note>
    </ligand>
</feature>
<feature type="binding site" evidence="3">
    <location>
        <position position="64"/>
    </location>
    <ligand>
        <name>Zn(2+)</name>
        <dbReference type="ChEBI" id="CHEBI:29105"/>
        <label>1</label>
        <note>catalytic</note>
    </ligand>
</feature>
<feature type="binding site" evidence="3">
    <location>
        <position position="66"/>
    </location>
    <ligand>
        <name>Zn(2+)</name>
        <dbReference type="ChEBI" id="CHEBI:29105"/>
        <label>2</label>
        <note>catalytic</note>
    </ligand>
</feature>
<feature type="binding site" evidence="3">
    <location>
        <position position="67"/>
    </location>
    <ligand>
        <name>Zn(2+)</name>
        <dbReference type="ChEBI" id="CHEBI:29105"/>
        <label>2</label>
        <note>catalytic</note>
    </ligand>
</feature>
<name>NSCB_TRIVH</name>
<sequence>MHLQGTNTYLVGTGKSRILIDTAQKNCKLANQYQKGLPVWINRISSFLYTHKIELSYVLLTHWHGDHTGGVPDLISRNSSLADKIYKNRPDSGQNPITHGQIFSVDGATVRAIFTPGHSVDHMCFLLEEENALFTGDNVLGHGFSVAQDLGRYMDSLRDMASLGCRIGYPAHGAVIEYLPGKLEEYIQHREGRERMMLSALTRQRVRGEGVREEGVKCGLTLNEIVMAIYGKLPPEVIEKALAPSLLQVLWKLTEDRMVGFKPGDPLKRQWFALEQRKRNKVRGCPS</sequence>
<keyword id="KW-0378">Hydrolase</keyword>
<keyword id="KW-0479">Metal-binding</keyword>
<keyword id="KW-0862">Zinc</keyword>